<comment type="function">
    <text evidence="1">Catalyzes the GTP-dependent ribosomal translocation step during translation elongation. During this step, the ribosome changes from the pre-translocational (PRE) to the post-translocational (POST) state as the newly formed A-site-bound peptidyl-tRNA and P-site-bound deacylated tRNA move to the P and E sites, respectively. Catalyzes the coordinated movement of the two tRNA molecules, the mRNA and conformational changes in the ribosome.</text>
</comment>
<comment type="subcellular location">
    <subcellularLocation>
        <location evidence="1">Cytoplasm</location>
    </subcellularLocation>
</comment>
<comment type="similarity">
    <text evidence="1">Belongs to the TRAFAC class translation factor GTPase superfamily. Classic translation factor GTPase family. EF-G/EF-2 subfamily.</text>
</comment>
<gene>
    <name evidence="1" type="primary">fusA</name>
    <name type="ordered locus">RPE_3589</name>
</gene>
<sequence>MPRVHAIEDYRNFGIMAHIDAGKTTTTERILYYTGKSHKIGEVHEGAATMDWMEQEQERGITITSAATTAFWNGKRLNIIDTPGHVDFTIEVERSLRVLDGAVCVLDSNQGVEPQTETVWRQGDKYRVPRIVFANKMDKTGADFFKCLQDIIDRLGAKPVAIQLPIGSENNFKGLIDLVRMKAVVWSDESLGAKFEDTEIPEDLLEQAKEYREKMIEAAVELDDDAMAAYLDGTEPEEAVLKRLIRKAVLTGAFYPVLCGSAFKNKGVQPLLDAVVDYLPSPVDVPAIKGIDEDGNEVTRHADDKEPLSLLAFKIMDDPFVGTITFCRIYSGVLQSGTGVVNSTREKKERIGRMLLMHANNREDIKEAYAGDIVALAGLKEARTGDTLCDPQKQVILEKMEFPEPVIEIAIEPKSKADQEKLGVALAKLAAEDPSFRVSTDLESGQTILKGMGELHLDIKVDILRRTYKVDANIGAPQVAFRERITKRAEVDYTHKKQTGGTGQFAAVKFIVEPNEPGGGYVFESKIVGGAVPKEYIPGVEKGIESVLSSGVVAGFPVVDVKVSLIDGKYHDVDSSALAFEIASRAAFREALQKGKSVLLEPIMKVECVTPEDYTGSVIGDLNSRRGQIQGQDMRGNANVINAMVPLMNMFGYVNNLRSMSQGRATFTMQFDHYAEAPANVSAEVQKKFA</sequence>
<accession>Q07KL5</accession>
<dbReference type="EMBL" id="CP000463">
    <property type="protein sequence ID" value="ABJ07519.1"/>
    <property type="molecule type" value="Genomic_DNA"/>
</dbReference>
<dbReference type="SMR" id="Q07KL5"/>
<dbReference type="STRING" id="316055.RPE_3589"/>
<dbReference type="KEGG" id="rpe:RPE_3589"/>
<dbReference type="eggNOG" id="COG0480">
    <property type="taxonomic scope" value="Bacteria"/>
</dbReference>
<dbReference type="HOGENOM" id="CLU_002794_4_1_5"/>
<dbReference type="OrthoDB" id="9802948at2"/>
<dbReference type="GO" id="GO:0005737">
    <property type="term" value="C:cytoplasm"/>
    <property type="evidence" value="ECO:0007669"/>
    <property type="project" value="UniProtKB-SubCell"/>
</dbReference>
<dbReference type="GO" id="GO:0005525">
    <property type="term" value="F:GTP binding"/>
    <property type="evidence" value="ECO:0007669"/>
    <property type="project" value="UniProtKB-UniRule"/>
</dbReference>
<dbReference type="GO" id="GO:0003924">
    <property type="term" value="F:GTPase activity"/>
    <property type="evidence" value="ECO:0007669"/>
    <property type="project" value="InterPro"/>
</dbReference>
<dbReference type="GO" id="GO:0097216">
    <property type="term" value="F:guanosine tetraphosphate binding"/>
    <property type="evidence" value="ECO:0007669"/>
    <property type="project" value="UniProtKB-ARBA"/>
</dbReference>
<dbReference type="GO" id="GO:0003746">
    <property type="term" value="F:translation elongation factor activity"/>
    <property type="evidence" value="ECO:0007669"/>
    <property type="project" value="UniProtKB-UniRule"/>
</dbReference>
<dbReference type="GO" id="GO:0032790">
    <property type="term" value="P:ribosome disassembly"/>
    <property type="evidence" value="ECO:0007669"/>
    <property type="project" value="TreeGrafter"/>
</dbReference>
<dbReference type="CDD" id="cd01886">
    <property type="entry name" value="EF-G"/>
    <property type="match status" value="1"/>
</dbReference>
<dbReference type="CDD" id="cd16262">
    <property type="entry name" value="EFG_III"/>
    <property type="match status" value="1"/>
</dbReference>
<dbReference type="CDD" id="cd01434">
    <property type="entry name" value="EFG_mtEFG1_IV"/>
    <property type="match status" value="1"/>
</dbReference>
<dbReference type="CDD" id="cd03713">
    <property type="entry name" value="EFG_mtEFG_C"/>
    <property type="match status" value="1"/>
</dbReference>
<dbReference type="CDD" id="cd04088">
    <property type="entry name" value="EFG_mtEFG_II"/>
    <property type="match status" value="1"/>
</dbReference>
<dbReference type="FunFam" id="2.40.30.10:FF:000006">
    <property type="entry name" value="Elongation factor G"/>
    <property type="match status" value="1"/>
</dbReference>
<dbReference type="FunFam" id="3.30.230.10:FF:000003">
    <property type="entry name" value="Elongation factor G"/>
    <property type="match status" value="1"/>
</dbReference>
<dbReference type="FunFam" id="3.30.70.240:FF:000001">
    <property type="entry name" value="Elongation factor G"/>
    <property type="match status" value="1"/>
</dbReference>
<dbReference type="FunFam" id="3.30.70.870:FF:000001">
    <property type="entry name" value="Elongation factor G"/>
    <property type="match status" value="1"/>
</dbReference>
<dbReference type="FunFam" id="3.40.50.300:FF:000029">
    <property type="entry name" value="Elongation factor G"/>
    <property type="match status" value="1"/>
</dbReference>
<dbReference type="Gene3D" id="3.30.230.10">
    <property type="match status" value="1"/>
</dbReference>
<dbReference type="Gene3D" id="3.30.70.240">
    <property type="match status" value="1"/>
</dbReference>
<dbReference type="Gene3D" id="3.30.70.870">
    <property type="entry name" value="Elongation Factor G (Translational Gtpase), domain 3"/>
    <property type="match status" value="1"/>
</dbReference>
<dbReference type="Gene3D" id="3.40.50.300">
    <property type="entry name" value="P-loop containing nucleotide triphosphate hydrolases"/>
    <property type="match status" value="1"/>
</dbReference>
<dbReference type="Gene3D" id="2.40.30.10">
    <property type="entry name" value="Translation factors"/>
    <property type="match status" value="1"/>
</dbReference>
<dbReference type="HAMAP" id="MF_00054_B">
    <property type="entry name" value="EF_G_EF_2_B"/>
    <property type="match status" value="1"/>
</dbReference>
<dbReference type="InterPro" id="IPR041095">
    <property type="entry name" value="EFG_II"/>
</dbReference>
<dbReference type="InterPro" id="IPR009022">
    <property type="entry name" value="EFG_III"/>
</dbReference>
<dbReference type="InterPro" id="IPR035647">
    <property type="entry name" value="EFG_III/V"/>
</dbReference>
<dbReference type="InterPro" id="IPR047872">
    <property type="entry name" value="EFG_IV"/>
</dbReference>
<dbReference type="InterPro" id="IPR035649">
    <property type="entry name" value="EFG_V"/>
</dbReference>
<dbReference type="InterPro" id="IPR000640">
    <property type="entry name" value="EFG_V-like"/>
</dbReference>
<dbReference type="InterPro" id="IPR004161">
    <property type="entry name" value="EFTu-like_2"/>
</dbReference>
<dbReference type="InterPro" id="IPR031157">
    <property type="entry name" value="G_TR_CS"/>
</dbReference>
<dbReference type="InterPro" id="IPR027417">
    <property type="entry name" value="P-loop_NTPase"/>
</dbReference>
<dbReference type="InterPro" id="IPR020568">
    <property type="entry name" value="Ribosomal_Su5_D2-typ_SF"/>
</dbReference>
<dbReference type="InterPro" id="IPR014721">
    <property type="entry name" value="Ribsml_uS5_D2-typ_fold_subgr"/>
</dbReference>
<dbReference type="InterPro" id="IPR005225">
    <property type="entry name" value="Small_GTP-bd"/>
</dbReference>
<dbReference type="InterPro" id="IPR000795">
    <property type="entry name" value="T_Tr_GTP-bd_dom"/>
</dbReference>
<dbReference type="InterPro" id="IPR009000">
    <property type="entry name" value="Transl_B-barrel_sf"/>
</dbReference>
<dbReference type="InterPro" id="IPR004540">
    <property type="entry name" value="Transl_elong_EFG/EF2"/>
</dbReference>
<dbReference type="InterPro" id="IPR005517">
    <property type="entry name" value="Transl_elong_EFG/EF2_IV"/>
</dbReference>
<dbReference type="NCBIfam" id="TIGR00484">
    <property type="entry name" value="EF-G"/>
    <property type="match status" value="1"/>
</dbReference>
<dbReference type="NCBIfam" id="NF009379">
    <property type="entry name" value="PRK12740.1-3"/>
    <property type="match status" value="1"/>
</dbReference>
<dbReference type="NCBIfam" id="NF009381">
    <property type="entry name" value="PRK12740.1-5"/>
    <property type="match status" value="1"/>
</dbReference>
<dbReference type="NCBIfam" id="TIGR00231">
    <property type="entry name" value="small_GTP"/>
    <property type="match status" value="1"/>
</dbReference>
<dbReference type="PANTHER" id="PTHR43261:SF1">
    <property type="entry name" value="RIBOSOME-RELEASING FACTOR 2, MITOCHONDRIAL"/>
    <property type="match status" value="1"/>
</dbReference>
<dbReference type="PANTHER" id="PTHR43261">
    <property type="entry name" value="TRANSLATION ELONGATION FACTOR G-RELATED"/>
    <property type="match status" value="1"/>
</dbReference>
<dbReference type="Pfam" id="PF00679">
    <property type="entry name" value="EFG_C"/>
    <property type="match status" value="1"/>
</dbReference>
<dbReference type="Pfam" id="PF14492">
    <property type="entry name" value="EFG_III"/>
    <property type="match status" value="1"/>
</dbReference>
<dbReference type="Pfam" id="PF03764">
    <property type="entry name" value="EFG_IV"/>
    <property type="match status" value="1"/>
</dbReference>
<dbReference type="Pfam" id="PF00009">
    <property type="entry name" value="GTP_EFTU"/>
    <property type="match status" value="1"/>
</dbReference>
<dbReference type="Pfam" id="PF03144">
    <property type="entry name" value="GTP_EFTU_D2"/>
    <property type="match status" value="1"/>
</dbReference>
<dbReference type="PRINTS" id="PR00315">
    <property type="entry name" value="ELONGATNFCT"/>
</dbReference>
<dbReference type="SMART" id="SM00838">
    <property type="entry name" value="EFG_C"/>
    <property type="match status" value="1"/>
</dbReference>
<dbReference type="SMART" id="SM00889">
    <property type="entry name" value="EFG_IV"/>
    <property type="match status" value="1"/>
</dbReference>
<dbReference type="SUPFAM" id="SSF54980">
    <property type="entry name" value="EF-G C-terminal domain-like"/>
    <property type="match status" value="2"/>
</dbReference>
<dbReference type="SUPFAM" id="SSF52540">
    <property type="entry name" value="P-loop containing nucleoside triphosphate hydrolases"/>
    <property type="match status" value="1"/>
</dbReference>
<dbReference type="SUPFAM" id="SSF54211">
    <property type="entry name" value="Ribosomal protein S5 domain 2-like"/>
    <property type="match status" value="1"/>
</dbReference>
<dbReference type="SUPFAM" id="SSF50447">
    <property type="entry name" value="Translation proteins"/>
    <property type="match status" value="1"/>
</dbReference>
<dbReference type="PROSITE" id="PS00301">
    <property type="entry name" value="G_TR_1"/>
    <property type="match status" value="1"/>
</dbReference>
<dbReference type="PROSITE" id="PS51722">
    <property type="entry name" value="G_TR_2"/>
    <property type="match status" value="1"/>
</dbReference>
<organism>
    <name type="scientific">Rhodopseudomonas palustris (strain BisA53)</name>
    <dbReference type="NCBI Taxonomy" id="316055"/>
    <lineage>
        <taxon>Bacteria</taxon>
        <taxon>Pseudomonadati</taxon>
        <taxon>Pseudomonadota</taxon>
        <taxon>Alphaproteobacteria</taxon>
        <taxon>Hyphomicrobiales</taxon>
        <taxon>Nitrobacteraceae</taxon>
        <taxon>Rhodopseudomonas</taxon>
    </lineage>
</organism>
<reference key="1">
    <citation type="submission" date="2006-09" db="EMBL/GenBank/DDBJ databases">
        <title>Complete sequence of Rhodopseudomonas palustris BisA53.</title>
        <authorList>
            <consortium name="US DOE Joint Genome Institute"/>
            <person name="Copeland A."/>
            <person name="Lucas S."/>
            <person name="Lapidus A."/>
            <person name="Barry K."/>
            <person name="Detter J.C."/>
            <person name="Glavina del Rio T."/>
            <person name="Hammon N."/>
            <person name="Israni S."/>
            <person name="Dalin E."/>
            <person name="Tice H."/>
            <person name="Pitluck S."/>
            <person name="Chain P."/>
            <person name="Malfatti S."/>
            <person name="Shin M."/>
            <person name="Vergez L."/>
            <person name="Schmutz J."/>
            <person name="Larimer F."/>
            <person name="Land M."/>
            <person name="Hauser L."/>
            <person name="Pelletier D.A."/>
            <person name="Kyrpides N."/>
            <person name="Kim E."/>
            <person name="Harwood C.S."/>
            <person name="Oda Y."/>
            <person name="Richardson P."/>
        </authorList>
    </citation>
    <scope>NUCLEOTIDE SEQUENCE [LARGE SCALE GENOMIC DNA]</scope>
    <source>
        <strain>BisA53</strain>
    </source>
</reference>
<feature type="chain" id="PRO_1000008872" description="Elongation factor G">
    <location>
        <begin position="1"/>
        <end position="690"/>
    </location>
</feature>
<feature type="domain" description="tr-type G">
    <location>
        <begin position="8"/>
        <end position="283"/>
    </location>
</feature>
<feature type="binding site" evidence="1">
    <location>
        <begin position="17"/>
        <end position="24"/>
    </location>
    <ligand>
        <name>GTP</name>
        <dbReference type="ChEBI" id="CHEBI:37565"/>
    </ligand>
</feature>
<feature type="binding site" evidence="1">
    <location>
        <begin position="81"/>
        <end position="85"/>
    </location>
    <ligand>
        <name>GTP</name>
        <dbReference type="ChEBI" id="CHEBI:37565"/>
    </ligand>
</feature>
<feature type="binding site" evidence="1">
    <location>
        <begin position="135"/>
        <end position="138"/>
    </location>
    <ligand>
        <name>GTP</name>
        <dbReference type="ChEBI" id="CHEBI:37565"/>
    </ligand>
</feature>
<proteinExistence type="inferred from homology"/>
<keyword id="KW-0963">Cytoplasm</keyword>
<keyword id="KW-0251">Elongation factor</keyword>
<keyword id="KW-0342">GTP-binding</keyword>
<keyword id="KW-0547">Nucleotide-binding</keyword>
<keyword id="KW-0648">Protein biosynthesis</keyword>
<evidence type="ECO:0000255" key="1">
    <source>
        <dbReference type="HAMAP-Rule" id="MF_00054"/>
    </source>
</evidence>
<protein>
    <recommendedName>
        <fullName evidence="1">Elongation factor G</fullName>
        <shortName evidence="1">EF-G</shortName>
    </recommendedName>
</protein>
<name>EFG_RHOP5</name>